<organism>
    <name type="scientific">Anthoceros angustus</name>
    <name type="common">Hornwort</name>
    <name type="synonym">Anthoceros formosae</name>
    <dbReference type="NCBI Taxonomy" id="48387"/>
    <lineage>
        <taxon>Eukaryota</taxon>
        <taxon>Viridiplantae</taxon>
        <taxon>Streptophyta</taxon>
        <taxon>Embryophyta</taxon>
        <taxon>Anthocerotophyta</taxon>
        <taxon>Anthocerotopsida</taxon>
        <taxon>Anthocerotidae</taxon>
        <taxon>Anthocerotales</taxon>
        <taxon>Anthocerotaceae</taxon>
        <taxon>Anthoceros</taxon>
    </lineage>
</organism>
<comment type="function">
    <text evidence="1">Involved in protein precursor import into chloroplasts. May be part of an intermediate translocation complex acting as a protein-conducting channel at the inner envelope.</text>
</comment>
<comment type="subunit">
    <text evidence="1">Part of the Tic complex.</text>
</comment>
<comment type="subcellular location">
    <subcellularLocation>
        <location evidence="1">Plastid</location>
        <location evidence="1">Chloroplast inner membrane</location>
        <topology evidence="2">Multi-pass membrane protein</topology>
    </subcellularLocation>
</comment>
<comment type="RNA editing">
    <location>
        <position position="26" evidence="3 4"/>
    </location>
    <location>
        <position position="36" evidence="3 4"/>
    </location>
    <location>
        <position position="71" evidence="3 4"/>
    </location>
    <location>
        <position position="103" evidence="3 4"/>
    </location>
    <location>
        <position position="130" evidence="3 4"/>
    </location>
    <location>
        <position position="168" evidence="3 4"/>
    </location>
    <location>
        <position position="218" evidence="3 4"/>
    </location>
    <location>
        <position position="348" evidence="3 4"/>
    </location>
    <location>
        <position position="408" evidence="3 4"/>
    </location>
    <location>
        <position position="470" evidence="3 4"/>
    </location>
    <location>
        <position position="537" evidence="3 4"/>
    </location>
    <location>
        <position position="566" evidence="3 4"/>
    </location>
    <location>
        <position position="618" evidence="3 4"/>
    </location>
    <location>
        <position position="672" evidence="3 4"/>
    </location>
    <location>
        <position position="813" evidence="3 4"/>
    </location>
    <location>
        <position position="819" evidence="3 4"/>
    </location>
    <text>The nonsense codons at positions 71, 130, 348, 408, 537 and 813 are modified to sense codons.</text>
</comment>
<comment type="similarity">
    <text evidence="5">Belongs to the TIC214 family.</text>
</comment>
<comment type="caution">
    <text>Could be the product of a pseudogene. In A.formosae this protein is in two parts: ORF 1031 (N-terminal) and ORF 473 (C-terminal).</text>
</comment>
<feature type="chain" id="PRO_0000217295" description="Putative protein TIC 214 N-terminal part">
    <location>
        <begin position="1"/>
        <end position="1031"/>
    </location>
</feature>
<feature type="transmembrane region" description="Helical" evidence="2">
    <location>
        <begin position="11"/>
        <end position="31"/>
    </location>
</feature>
<feature type="transmembrane region" description="Helical" evidence="2">
    <location>
        <begin position="68"/>
        <end position="88"/>
    </location>
</feature>
<feature type="transmembrane region" description="Helical" evidence="2">
    <location>
        <begin position="92"/>
        <end position="112"/>
    </location>
</feature>
<feature type="transmembrane region" description="Helical" evidence="2">
    <location>
        <begin position="127"/>
        <end position="147"/>
    </location>
</feature>
<feature type="transmembrane region" description="Helical" evidence="2">
    <location>
        <begin position="166"/>
        <end position="186"/>
    </location>
</feature>
<feature type="transmembrane region" description="Helical" evidence="2">
    <location>
        <begin position="212"/>
        <end position="232"/>
    </location>
</feature>
<gene>
    <name evidence="1" type="primary">TIC214</name>
    <name type="synonym">ycf1</name>
</gene>
<dbReference type="EMBL" id="AB086179">
    <property type="protein sequence ID" value="BAC55409.1"/>
    <property type="molecule type" value="Genomic_DNA"/>
</dbReference>
<dbReference type="EMBL" id="AB087492">
    <property type="protein sequence ID" value="BAC55509.1"/>
    <property type="molecule type" value="mRNA"/>
</dbReference>
<dbReference type="SMR" id="Q85B66"/>
<dbReference type="GO" id="GO:0009706">
    <property type="term" value="C:chloroplast inner membrane"/>
    <property type="evidence" value="ECO:0007669"/>
    <property type="project" value="UniProtKB-SubCell"/>
</dbReference>
<dbReference type="GO" id="GO:0015031">
    <property type="term" value="P:protein transport"/>
    <property type="evidence" value="ECO:0007669"/>
    <property type="project" value="UniProtKB-KW"/>
</dbReference>
<dbReference type="InterPro" id="IPR008896">
    <property type="entry name" value="TIC214"/>
</dbReference>
<dbReference type="PANTHER" id="PTHR33163:SF40">
    <property type="entry name" value="PROTEIN TIC 214"/>
    <property type="match status" value="1"/>
</dbReference>
<dbReference type="PANTHER" id="PTHR33163">
    <property type="entry name" value="PROTEIN TIC 214-RELATED"/>
    <property type="match status" value="1"/>
</dbReference>
<dbReference type="Pfam" id="PF05758">
    <property type="entry name" value="Ycf1"/>
    <property type="match status" value="3"/>
</dbReference>
<sequence>MITSITLLFSILWAQILSWISISGPLILFGLYYGFSITLPMGPSQILSIRAFLLEGNLSGLMALGGSTLGQLIILISIFYSPLYIMLLKPHAITLITLPYVLFYWYEIKDLSDYQPLRPITSLNDTGIIQIFLNSFLFQIFNPILLPSPVLTRLVKLFLFRYSHNSFFVISLFCGWLGGNILLINLSKFLLIRIKNNSSTLYLLVKRLIYRTFSIIIFVACLSYLGKFPVPFSMKKSSDESSLNEWKAERLSWLYKPWPTSLFNYRKWNRPLRYIENSRFSNKSPVKRNVSQYFFDVCLNDGRQRISFTSLPSFSIFEKNLKNYLNVSRISSSSDVFYQEWINTKKEQKDDLYSEVEERIKALDNGFSLEHAIEKRIGFSSINKEDIPNKTYDPFLDGEFRGKVAVSQSPLLLTGKSYGLTKTQKLLHLSRKNNKLKFWISNKWRKLERKDLPLPWEPLTQDARRVLILLIKGLRNKKSKIDSQRNDFSKEQGVIALNEENISPEFSAKTNNTNFLREKAIRKSHINWELVLNLSLRQRILYFNYLEKVKWETIKNSWKDLISGNFTEVKNIGSLVMKIMKIHQESPLQEFHKEVPRWTSKLKNDKFDVIAIGVTDIRQRKVRNLGYLIKGREKRRKIVRRFSQQSDFRRKLIKGSMRARRRKTLIWKILQFKTHSPFFLKITEKPALFRSTEIMEDIDVKGTFLNTIGIEKLISLLSERGVAIKGTKADRLAIANRWDFPLAQWGRSWLLIIQSYLRKYVVLPILIILKNISRLFLLQVPEWNEDWNEWSEEIHIKCTYDGTEVSERELPEQWLRDGLQIKIIYPFHLKPWHNSKFKEKGNRNMEPNFPHTQNKGKETSDNKAYRLQKNKKFKYSFLTAWGFQTNLPFGNIKKQPSFWKPVIKELKKRWKREILSKTANFYELYYNISLLYRKSDISNRFKIFAEFDIQTDERMNHEISKIQVNSESGGASVTDDGIKRESPLGITLNSENSNFSENEDFLWEIPVESRYKTAKNIKKLESLVVSKNNLT</sequence>
<evidence type="ECO:0000250" key="1">
    <source>
        <dbReference type="UniProtKB" id="P56785"/>
    </source>
</evidence>
<evidence type="ECO:0000255" key="2"/>
<evidence type="ECO:0000269" key="3">
    <source>
    </source>
</evidence>
<evidence type="ECO:0000269" key="4">
    <source>
    </source>
</evidence>
<evidence type="ECO:0000305" key="5"/>
<geneLocation type="chloroplast"/>
<keyword id="KW-0150">Chloroplast</keyword>
<keyword id="KW-0472">Membrane</keyword>
<keyword id="KW-0934">Plastid</keyword>
<keyword id="KW-1001">Plastid inner membrane</keyword>
<keyword id="KW-0653">Protein transport</keyword>
<keyword id="KW-0691">RNA editing</keyword>
<keyword id="KW-0812">Transmembrane</keyword>
<keyword id="KW-1133">Transmembrane helix</keyword>
<keyword id="KW-0813">Transport</keyword>
<accession>Q85B66</accession>
<name>T214A_ANTAG</name>
<reference key="1">
    <citation type="journal article" date="2003" name="Nucleic Acids Res.">
        <title>The complete nucleotide sequence of the hornwort (Anthoceros formosae) chloroplast genome: insight into the earliest land plants.</title>
        <authorList>
            <person name="Kugita M."/>
            <person name="Kaneko A."/>
            <person name="Yamamoto Y."/>
            <person name="Takeya Y."/>
            <person name="Matsumoto T."/>
            <person name="Yoshinaga K."/>
        </authorList>
    </citation>
    <scope>NUCLEOTIDE SEQUENCE [LARGE SCALE GENOMIC DNA]</scope>
    <scope>RNA EDITING</scope>
</reference>
<reference key="2">
    <citation type="journal article" date="2003" name="Nucleic Acids Res.">
        <title>RNA editing in hornwort chloroplasts makes more than half the genes functional.</title>
        <authorList>
            <person name="Kugita M."/>
            <person name="Yamamoto Y."/>
            <person name="Fujikawa T."/>
            <person name="Matsumoto T."/>
            <person name="Yoshinaga K."/>
        </authorList>
    </citation>
    <scope>NUCLEOTIDE SEQUENCE [MRNA]</scope>
    <scope>RNA EDITING</scope>
    <source>
        <tissue>Thallus</tissue>
    </source>
</reference>
<proteinExistence type="uncertain"/>
<protein>
    <recommendedName>
        <fullName evidence="1">Putative protein TIC 214 N-terminal part</fullName>
    </recommendedName>
    <alternativeName>
        <fullName>ORF1031</fullName>
    </alternativeName>
    <alternativeName>
        <fullName evidence="1">Translocon at the inner envelope membrane of chloroplasts 214</fullName>
        <shortName evidence="1">AtTIC214</shortName>
    </alternativeName>
</protein>